<evidence type="ECO:0000250" key="1">
    <source>
        <dbReference type="UniProtKB" id="O80460"/>
    </source>
</evidence>
<evidence type="ECO:0000250" key="2">
    <source>
        <dbReference type="UniProtKB" id="Q058G9"/>
    </source>
</evidence>
<evidence type="ECO:0000250" key="3">
    <source>
        <dbReference type="UniProtKB" id="Q8L8Y3"/>
    </source>
</evidence>
<evidence type="ECO:0000255" key="4"/>
<evidence type="ECO:0000269" key="5">
    <source>
    </source>
</evidence>
<evidence type="ECO:0000269" key="6">
    <source>
    </source>
</evidence>
<evidence type="ECO:0000269" key="7">
    <source>
    </source>
</evidence>
<evidence type="ECO:0000269" key="8">
    <source>
    </source>
</evidence>
<evidence type="ECO:0000303" key="9">
    <source>
    </source>
</evidence>
<evidence type="ECO:0000305" key="10"/>
<evidence type="ECO:0000312" key="11">
    <source>
        <dbReference type="Araport" id="AT1G59835"/>
    </source>
</evidence>
<accession>Q3ECM0</accession>
<accession>A0MED5</accession>
<feature type="signal peptide" evidence="4">
    <location>
        <begin position="1"/>
        <end position="19"/>
    </location>
</feature>
<feature type="propeptide" id="PRO_0000439963" evidence="10">
    <location>
        <begin position="20"/>
        <end position="80"/>
    </location>
</feature>
<feature type="peptide" id="PRO_0000439964" description="C-terminally encoded peptide 2.2" evidence="2">
    <location>
        <begin position="81"/>
        <end position="95"/>
    </location>
</feature>
<feature type="propeptide" id="PRO_0000439965" evidence="10">
    <location>
        <begin position="96"/>
        <end position="105"/>
    </location>
</feature>
<feature type="peptide" id="PRO_0000439966" description="C-terminally encoded peptide 2.1" evidence="2">
    <location>
        <begin position="106"/>
        <end position="120"/>
    </location>
</feature>
<feature type="propeptide" id="PRO_0000439967" evidence="10">
    <location>
        <begin position="121"/>
        <end position="126"/>
    </location>
</feature>
<feature type="modified residue" description="Hydroxyproline" evidence="3">
    <location>
        <position position="84"/>
    </location>
</feature>
<feature type="modified residue" description="Hydroxyproline" evidence="2">
    <location>
        <position position="87"/>
    </location>
</feature>
<feature type="modified residue" description="Hydroxyproline" evidence="3">
    <location>
        <position position="109"/>
    </location>
</feature>
<feature type="modified residue" description="Hydroxyproline" evidence="2">
    <location>
        <position position="112"/>
    </location>
</feature>
<feature type="modified residue" description="Hydroxyproline" evidence="3">
    <location>
        <position position="116"/>
    </location>
</feature>
<gene>
    <name evidence="9" type="primary">CEP2</name>
    <name evidence="11" type="ordered locus">At1g59835</name>
    <name evidence="10" type="ORF">F23H11</name>
</gene>
<organism>
    <name type="scientific">Arabidopsis thaliana</name>
    <name type="common">Mouse-ear cress</name>
    <dbReference type="NCBI Taxonomy" id="3702"/>
    <lineage>
        <taxon>Eukaryota</taxon>
        <taxon>Viridiplantae</taxon>
        <taxon>Streptophyta</taxon>
        <taxon>Embryophyta</taxon>
        <taxon>Tracheophyta</taxon>
        <taxon>Spermatophyta</taxon>
        <taxon>Magnoliopsida</taxon>
        <taxon>eudicotyledons</taxon>
        <taxon>Gunneridae</taxon>
        <taxon>Pentapetalae</taxon>
        <taxon>rosids</taxon>
        <taxon>malvids</taxon>
        <taxon>Brassicales</taxon>
        <taxon>Brassicaceae</taxon>
        <taxon>Camelineae</taxon>
        <taxon>Arabidopsis</taxon>
    </lineage>
</organism>
<dbReference type="EMBL" id="AC007258">
    <property type="status" value="NOT_ANNOTATED_CDS"/>
    <property type="molecule type" value="Genomic_DNA"/>
</dbReference>
<dbReference type="EMBL" id="CP002684">
    <property type="protein sequence ID" value="AEE33625.1"/>
    <property type="molecule type" value="Genomic_DNA"/>
</dbReference>
<dbReference type="EMBL" id="DQ446377">
    <property type="protein sequence ID" value="ABE65412.1"/>
    <property type="molecule type" value="Genomic_DNA"/>
</dbReference>
<dbReference type="EMBL" id="DQ652905">
    <property type="protein sequence ID" value="ABK28151.1"/>
    <property type="status" value="ALT_SEQ"/>
    <property type="molecule type" value="Genomic_DNA"/>
</dbReference>
<dbReference type="RefSeq" id="NP_683452.1">
    <property type="nucleotide sequence ID" value="NM_148611.2"/>
</dbReference>
<dbReference type="STRING" id="3702.Q3ECM0"/>
<dbReference type="PaxDb" id="3702-AT1G59835.1"/>
<dbReference type="EnsemblPlants" id="AT1G59835.1">
    <property type="protein sequence ID" value="AT1G59835.1"/>
    <property type="gene ID" value="AT1G59835"/>
</dbReference>
<dbReference type="GeneID" id="842277"/>
<dbReference type="Gramene" id="AT1G59835.1">
    <property type="protein sequence ID" value="AT1G59835.1"/>
    <property type="gene ID" value="AT1G59835"/>
</dbReference>
<dbReference type="KEGG" id="ath:AT1G59835"/>
<dbReference type="Araport" id="AT1G59835"/>
<dbReference type="TAIR" id="AT1G59835"/>
<dbReference type="HOGENOM" id="CLU_1984620_0_0_1"/>
<dbReference type="InParanoid" id="Q3ECM0"/>
<dbReference type="OMA" id="HEHFNEY"/>
<dbReference type="PhylomeDB" id="Q3ECM0"/>
<dbReference type="PRO" id="PR:Q3ECM0"/>
<dbReference type="Proteomes" id="UP000006548">
    <property type="component" value="Chromosome 1"/>
</dbReference>
<dbReference type="ExpressionAtlas" id="Q3ECM0">
    <property type="expression patterns" value="baseline"/>
</dbReference>
<dbReference type="GO" id="GO:0048046">
    <property type="term" value="C:apoplast"/>
    <property type="evidence" value="ECO:0000250"/>
    <property type="project" value="UniProtKB"/>
</dbReference>
<dbReference type="GO" id="GO:0005179">
    <property type="term" value="F:hormone activity"/>
    <property type="evidence" value="ECO:0000250"/>
    <property type="project" value="UniProtKB"/>
</dbReference>
<dbReference type="GO" id="GO:0006995">
    <property type="term" value="P:cellular response to nitrogen starvation"/>
    <property type="evidence" value="ECO:0000270"/>
    <property type="project" value="UniProtKB"/>
</dbReference>
<dbReference type="GO" id="GO:1902025">
    <property type="term" value="P:nitrate import"/>
    <property type="evidence" value="ECO:0000314"/>
    <property type="project" value="UniProtKB"/>
</dbReference>
<dbReference type="GO" id="GO:1901371">
    <property type="term" value="P:regulation of leaf morphogenesis"/>
    <property type="evidence" value="ECO:0000315"/>
    <property type="project" value="UniProtKB"/>
</dbReference>
<dbReference type="GO" id="GO:2000280">
    <property type="term" value="P:regulation of root development"/>
    <property type="evidence" value="ECO:0000315"/>
    <property type="project" value="UniProtKB"/>
</dbReference>
<dbReference type="GO" id="GO:0048831">
    <property type="term" value="P:regulation of shoot system development"/>
    <property type="evidence" value="ECO:0000315"/>
    <property type="project" value="UniProtKB"/>
</dbReference>
<dbReference type="GO" id="GO:0060359">
    <property type="term" value="P:response to ammonium ion"/>
    <property type="evidence" value="ECO:0000270"/>
    <property type="project" value="UniProtKB"/>
</dbReference>
<dbReference type="GO" id="GO:0090548">
    <property type="term" value="P:response to nitrate starvation"/>
    <property type="evidence" value="ECO:0000270"/>
    <property type="project" value="UniProtKB"/>
</dbReference>
<dbReference type="GO" id="GO:0006970">
    <property type="term" value="P:response to osmotic stress"/>
    <property type="evidence" value="ECO:0000270"/>
    <property type="project" value="UniProtKB"/>
</dbReference>
<dbReference type="GO" id="GO:0048364">
    <property type="term" value="P:root development"/>
    <property type="evidence" value="ECO:0007669"/>
    <property type="project" value="InterPro"/>
</dbReference>
<dbReference type="InterPro" id="IPR033250">
    <property type="entry name" value="CEP"/>
</dbReference>
<dbReference type="PANTHER" id="PTHR33348:SF21">
    <property type="entry name" value="PRECURSOR OF CEP10-RELATED"/>
    <property type="match status" value="1"/>
</dbReference>
<dbReference type="PANTHER" id="PTHR33348">
    <property type="entry name" value="PRECURSOR OF CEP5"/>
    <property type="match status" value="1"/>
</dbReference>
<sequence length="126" mass="14118">MKLFIITVVTILTISRVFDKTPATTEARKSKKMVGHEHFNEYLDPTFAGHTFGVVKEDFLEVKKLKKIGDENNLKNRFINEFAPTNPEDSLGIGHPRVLNNKFTNDFAPTNPGDSPGIRHPGVVNV</sequence>
<protein>
    <recommendedName>
        <fullName evidence="9">Precursor of CEP2</fullName>
        <shortName evidence="9">PCEP2</shortName>
    </recommendedName>
    <component>
        <recommendedName>
            <fullName evidence="9">C-terminally encoded peptide 2.1</fullName>
            <shortName evidence="9">CEP2.1</shortName>
        </recommendedName>
    </component>
    <component>
        <recommendedName>
            <fullName evidence="9">C-terminally encoded peptide 2.2</fullName>
            <shortName evidence="9">CEP2.2</shortName>
        </recommendedName>
    </component>
</protein>
<keyword id="KW-0052">Apoplast</keyword>
<keyword id="KW-0217">Developmental protein</keyword>
<keyword id="KW-0372">Hormone</keyword>
<keyword id="KW-0379">Hydroxylation</keyword>
<keyword id="KW-1185">Reference proteome</keyword>
<keyword id="KW-0964">Secreted</keyword>
<keyword id="KW-0732">Signal</keyword>
<comment type="function">
    <text evidence="7 8">Extracellular signaling peptide that represses primary root growth rate. Negatively regulates the number of leaves and flowering, and modulates leaf morphology (PubMed:24179096). Regulates systemic nitrogen (N)-demand signaling. Mediates up-regulation of genes involved in N uptake and assimilation pathways (PubMed:25324386).</text>
</comment>
<comment type="subunit">
    <text evidence="3">Interacts with CEP receptors (e.g. CEPR1 and CEPR2).</text>
</comment>
<comment type="subcellular location">
    <molecule>C-terminally encoded peptide 2.1</molecule>
    <subcellularLocation>
        <location evidence="1">Secreted</location>
        <location evidence="1">Extracellular space</location>
        <location evidence="1">Apoplast</location>
    </subcellularLocation>
    <text evidence="1">Accumulates in xylem sap.</text>
</comment>
<comment type="subcellular location">
    <molecule>C-terminally encoded peptide 2.2</molecule>
    <subcellularLocation>
        <location evidence="1">Secreted</location>
        <location evidence="1">Extracellular space</location>
        <location evidence="1">Apoplast</location>
    </subcellularLocation>
    <text evidence="1">Accumulates in xylem sap.</text>
</comment>
<comment type="tissue specificity">
    <text evidence="5 6">Mostly expressed in roots (PubMed:18315543). Present in cotyledons, shoot apical meristem (SAM), leaves, inflorescence stems and flowers (PubMed:24179095).</text>
</comment>
<comment type="induction">
    <text evidence="7">Accumulates in shoots in response to nitrate depletion and to osmotic stress (e.g. mannitol), but repressed by ammonium chloride NH(4)Cl and nitrogen starvation.</text>
</comment>
<comment type="PTM">
    <text evidence="3">The mature small signaling peptide is generated by proteolytic processing of the longer precursor.</text>
</comment>
<comment type="similarity">
    <text evidence="10">Belongs to the C-terminally encoded plant signaling peptide (CEP) family.</text>
</comment>
<comment type="sequence caution" evidence="10">
    <conflict type="erroneous termination">
        <sequence resource="EMBL-CDS" id="ABK28151"/>
    </conflict>
    <text>Extended C-terminus.</text>
</comment>
<reference key="1">
    <citation type="journal article" date="2000" name="Nature">
        <title>Sequence and analysis of chromosome 1 of the plant Arabidopsis thaliana.</title>
        <authorList>
            <person name="Theologis A."/>
            <person name="Ecker J.R."/>
            <person name="Palm C.J."/>
            <person name="Federspiel N.A."/>
            <person name="Kaul S."/>
            <person name="White O."/>
            <person name="Alonso J."/>
            <person name="Altafi H."/>
            <person name="Araujo R."/>
            <person name="Bowman C.L."/>
            <person name="Brooks S.Y."/>
            <person name="Buehler E."/>
            <person name="Chan A."/>
            <person name="Chao Q."/>
            <person name="Chen H."/>
            <person name="Cheuk R.F."/>
            <person name="Chin C.W."/>
            <person name="Chung M.K."/>
            <person name="Conn L."/>
            <person name="Conway A.B."/>
            <person name="Conway A.R."/>
            <person name="Creasy T.H."/>
            <person name="Dewar K."/>
            <person name="Dunn P."/>
            <person name="Etgu P."/>
            <person name="Feldblyum T.V."/>
            <person name="Feng J.-D."/>
            <person name="Fong B."/>
            <person name="Fujii C.Y."/>
            <person name="Gill J.E."/>
            <person name="Goldsmith A.D."/>
            <person name="Haas B."/>
            <person name="Hansen N.F."/>
            <person name="Hughes B."/>
            <person name="Huizar L."/>
            <person name="Hunter J.L."/>
            <person name="Jenkins J."/>
            <person name="Johnson-Hopson C."/>
            <person name="Khan S."/>
            <person name="Khaykin E."/>
            <person name="Kim C.J."/>
            <person name="Koo H.L."/>
            <person name="Kremenetskaia I."/>
            <person name="Kurtz D.B."/>
            <person name="Kwan A."/>
            <person name="Lam B."/>
            <person name="Langin-Hooper S."/>
            <person name="Lee A."/>
            <person name="Lee J.M."/>
            <person name="Lenz C.A."/>
            <person name="Li J.H."/>
            <person name="Li Y.-P."/>
            <person name="Lin X."/>
            <person name="Liu S.X."/>
            <person name="Liu Z.A."/>
            <person name="Luros J.S."/>
            <person name="Maiti R."/>
            <person name="Marziali A."/>
            <person name="Militscher J."/>
            <person name="Miranda M."/>
            <person name="Nguyen M."/>
            <person name="Nierman W.C."/>
            <person name="Osborne B.I."/>
            <person name="Pai G."/>
            <person name="Peterson J."/>
            <person name="Pham P.K."/>
            <person name="Rizzo M."/>
            <person name="Rooney T."/>
            <person name="Rowley D."/>
            <person name="Sakano H."/>
            <person name="Salzberg S.L."/>
            <person name="Schwartz J.R."/>
            <person name="Shinn P."/>
            <person name="Southwick A.M."/>
            <person name="Sun H."/>
            <person name="Tallon L.J."/>
            <person name="Tambunga G."/>
            <person name="Toriumi M.J."/>
            <person name="Town C.D."/>
            <person name="Utterback T."/>
            <person name="Van Aken S."/>
            <person name="Vaysberg M."/>
            <person name="Vysotskaia V.S."/>
            <person name="Walker M."/>
            <person name="Wu D."/>
            <person name="Yu G."/>
            <person name="Fraser C.M."/>
            <person name="Venter J.C."/>
            <person name="Davis R.W."/>
        </authorList>
    </citation>
    <scope>NUCLEOTIDE SEQUENCE [LARGE SCALE GENOMIC DNA]</scope>
    <source>
        <strain>cv. Columbia</strain>
    </source>
</reference>
<reference key="2">
    <citation type="journal article" date="2017" name="Plant J.">
        <title>Araport11: a complete reannotation of the Arabidopsis thaliana reference genome.</title>
        <authorList>
            <person name="Cheng C.Y."/>
            <person name="Krishnakumar V."/>
            <person name="Chan A.P."/>
            <person name="Thibaud-Nissen F."/>
            <person name="Schobel S."/>
            <person name="Town C.D."/>
        </authorList>
    </citation>
    <scope>GENOME REANNOTATION</scope>
    <source>
        <strain>cv. Columbia</strain>
    </source>
</reference>
<reference key="3">
    <citation type="journal article" date="2006" name="Plant Biotechnol. J.">
        <title>Simultaneous high-throughput recombinational cloning of open reading frames in closed and open configurations.</title>
        <authorList>
            <person name="Underwood B.A."/>
            <person name="Vanderhaeghen R."/>
            <person name="Whitford R."/>
            <person name="Town C.D."/>
            <person name="Hilson P."/>
        </authorList>
    </citation>
    <scope>NUCLEOTIDE SEQUENCE [LARGE SCALE GENOMIC DNA]</scope>
    <source>
        <strain>cv. Columbia</strain>
    </source>
</reference>
<reference key="4">
    <citation type="journal article" date="2008" name="Plant J.">
        <title>Identification of a biologically active, small, secreted peptide in Arabidopsis by in silico gene screening, followed by LC-MS-based structure analysis.</title>
        <authorList>
            <person name="Ohyama K."/>
            <person name="Ogawa M."/>
            <person name="Matsubayashi Y."/>
        </authorList>
    </citation>
    <scope>TISSUE SPECIFICITY</scope>
</reference>
<reference key="5">
    <citation type="journal article" date="2011" name="Arabidopsis Book">
        <title>Small post-translationally modified Peptide signals in Arabidopsis.</title>
        <authorList>
            <person name="Matsubayashi Y."/>
        </authorList>
    </citation>
    <scope>REVIEW</scope>
</reference>
<reference key="6">
    <citation type="journal article" date="2013" name="J. Exp. Bot.">
        <title>The CEP family in land plants: evolutionary analyses, expression studies, and role in Arabidopsis shoot development.</title>
        <authorList>
            <person name="Roberts I."/>
            <person name="Smith S."/>
            <person name="De Rybel B."/>
            <person name="Van Den Broeke J."/>
            <person name="Smet W."/>
            <person name="De Cokere S."/>
            <person name="Mispelaere M."/>
            <person name="De Smet I."/>
            <person name="Beeckman T."/>
        </authorList>
    </citation>
    <scope>TISSUE SPECIFICITY</scope>
    <scope>GENE FAMILY</scope>
    <source>
        <strain>cv. Columbia</strain>
    </source>
</reference>
<reference key="7">
    <citation type="journal article" date="2013" name="J. Exp. Bot.">
        <title>CEP genes regulate root and shoot development in response to environmental cues and are specific to seed plants.</title>
        <authorList>
            <person name="Delay C."/>
            <person name="Imin N."/>
            <person name="Djordjevic M.A."/>
        </authorList>
    </citation>
    <scope>FUNCTION</scope>
    <scope>INDUCTION BY OSMOTIC STRESS; AMMONIUM CHLORIDE STARVATION; NITROGEN DEPLETION AND NITRATE DEPLETION</scope>
    <scope>GENE FAMILY</scope>
    <scope>NOMENCLATURE</scope>
    <source>
        <strain>cv. Columbia</strain>
    </source>
</reference>
<reference key="8">
    <citation type="journal article" date="2014" name="Science">
        <title>Perception of root-derived peptides by shoot LRR-RKs mediates systemic N-demand signaling.</title>
        <authorList>
            <person name="Tabata R."/>
            <person name="Sumida K."/>
            <person name="Yoshii T."/>
            <person name="Ohyama K."/>
            <person name="Shinohara H."/>
            <person name="Matsubayashi Y."/>
        </authorList>
    </citation>
    <scope>FUNCTION</scope>
    <source>
        <strain>cv. No-0</strain>
    </source>
</reference>
<proteinExistence type="evidence at transcript level"/>
<name>PCEP2_ARATH</name>